<feature type="chain" id="PRO_0000295154" description="Protein transport protein Sec31B">
    <location>
        <begin position="1"/>
        <end position="1158"/>
    </location>
</feature>
<feature type="repeat" description="WD 1">
    <location>
        <begin position="4"/>
        <end position="47"/>
    </location>
</feature>
<feature type="repeat" description="WD 2">
    <location>
        <begin position="65"/>
        <end position="110"/>
    </location>
</feature>
<feature type="repeat" description="WD 3">
    <location>
        <begin position="119"/>
        <end position="159"/>
    </location>
</feature>
<feature type="repeat" description="WD 4">
    <location>
        <begin position="166"/>
        <end position="206"/>
    </location>
</feature>
<feature type="repeat" description="WD 5">
    <location>
        <begin position="209"/>
        <end position="254"/>
    </location>
</feature>
<feature type="repeat" description="WD 6">
    <location>
        <begin position="258"/>
        <end position="298"/>
    </location>
</feature>
<feature type="repeat" description="WD 7">
    <location>
        <begin position="301"/>
        <end position="341"/>
    </location>
</feature>
<feature type="repeat" description="WD 8; interaction with SEC13" evidence="3">
    <location>
        <begin position="376"/>
        <end position="407"/>
    </location>
</feature>
<feature type="region of interest" description="Disordered" evidence="4">
    <location>
        <begin position="485"/>
        <end position="520"/>
    </location>
</feature>
<feature type="region of interest" description="Disordered" evidence="4">
    <location>
        <begin position="797"/>
        <end position="843"/>
    </location>
</feature>
<feature type="region of interest" description="Disordered" evidence="4">
    <location>
        <begin position="968"/>
        <end position="1010"/>
    </location>
</feature>
<feature type="compositionally biased region" description="Low complexity" evidence="4">
    <location>
        <begin position="822"/>
        <end position="840"/>
    </location>
</feature>
<feature type="splice variant" id="VSP_026764" description="In isoform 2." evidence="5">
    <location>
        <begin position="1"/>
        <end position="157"/>
    </location>
</feature>
<feature type="sequence conflict" description="In Ref. 1; BAE34320." evidence="6" ref="1">
    <original>L</original>
    <variation>P</variation>
    <location>
        <position position="275"/>
    </location>
</feature>
<feature type="sequence conflict" description="In Ref. 1; BAE34320." evidence="6" ref="1">
    <original>M</original>
    <variation>I</variation>
    <location>
        <position position="334"/>
    </location>
</feature>
<feature type="sequence conflict" description="In Ref. 1; BAE34320." evidence="6" ref="1">
    <original>K</original>
    <variation>R</variation>
    <location>
        <position position="438"/>
    </location>
</feature>
<feature type="sequence conflict" description="In Ref. 1; BAE34320." evidence="6" ref="1">
    <original>R</original>
    <variation>G</variation>
    <location>
        <position position="847"/>
    </location>
</feature>
<feature type="sequence conflict" description="In Ref. 1; BAE34320." evidence="6" ref="1">
    <original>A</original>
    <variation>E</variation>
    <location>
        <position position="897"/>
    </location>
</feature>
<feature type="sequence conflict" description="In Ref. 1; BAE34320." evidence="6" ref="1">
    <original>T</original>
    <variation>A</variation>
    <location>
        <position position="1046"/>
    </location>
</feature>
<sequence>MKLKELEKPAVQAWSPARQYPVYLATGTSAQQLDASFSTNATLEIFEIDFRDPSLDLKHKGILSVSSRFHKLIWGSFGSGLLENSGVIAGGGDNGTLTLYNVTHVLSSGKEPLIAQKQKHTGAVRALDFNPFQGNLLASGASDSEIFIWDLNHLSVPMTPGPKSQNPPEDIKALSWNLQVQHILASAHPSGKAVVWDLRKNEPIIKVSSHSSRMNCSGLAWNPDIATQLVLCSEDDQLPVIQLWDLRFASSPLKVLESHSRGILSMSWNQADAELLLSTAKDSQIFCWNLSSSEVVYKLPTQSSWCFDVQWCPQSPPVFSAVSFDGWISLCSVMGRSWEAQHMRQADKVPEQVAQASLIPPLKKPPKWMRRPAGGSFAFGGKLVTFGLPSIPVQPVAQACSRPVFISQVITESEVLTRSVVLQEALGSGNLLNYCQSKVQQASLPCEKILWQFLKVTLEQDSRPKFLGLLGYSREELQKKVDTCLKSDSKSQESPQLEAVDLKSDRAHSPCAQASKHTAKEASESSAFFDELIPQNMTPWEIPTTEDTDGLLSQALLLGELRSAVELCLKEERFADAIILAQAGDAELLKWTQERYLAKRRTKTSSLLACVVKKNWKDLVCACRLKNWREALALLLTYSGPEKFPELCDMLGTRMEQEGGRALTSEARLCYVCSGSVERLVESWAKFQQASSPMALQELMEQVTVLSRSLELLQGSNKMSPGPATTHRLTQYANLLAAQGSLATAMSFLPSDCIQPGVQQLRDRLFHAQGSAVLGQQAPAFPFPRVAVGAALHSKETSSYRRGLQPPQQVPAPSVRPRTTAQPSSVMPFSPSQPSPSQGSSDHRVLRPQAILPGHFVPGVRPALSPPQLSGGQSVPAVNPAGFCGAWPLPGPTPVMASPDFMQPGSTHLPETPRLLPLPPVGPPGPNPLSSQLPASPVTFSVAPPPGGPRAPCSSALPSSGILATCPGPQDSWKVSPASQGNLQRKKLPETFMPPAPITAPLRSLGPEPQQALLPQPLVSSATLPPPGAPRECSLQQLQPLPPERTEKELPPEHQCVKDSFEALLQRCSLTATDLKTKRKLEEAARRLECLYEKLCEGTLSPHVLAGLHEVARCVDAGSFEQGLAVHAQVAGCSSFSEVSSFMPMLKAVLTIAHKLQG</sequence>
<comment type="function">
    <text evidence="2">As a component of the coat protein complex II (COPII), may function in vesicle budding and cargo export from the endoplasmic reticulum.</text>
</comment>
<comment type="subunit">
    <text evidence="1 2">COPII is composed of at least 5 proteins: the SEC23/24 complex, the SEC13/31 complex and SAR1. SEC13 and SEC31 make a 2:2 tetramer that forms the edge element of the COPII outer coat. The tetramer self-assembles in multiple copies to form the complete polyhedral cage. Interacts (via WD 8) with SEC13 (By similarity). Interacts with SEC31A (By similarity).</text>
</comment>
<comment type="subcellular location">
    <subcellularLocation>
        <location evidence="2">Cytoplasm</location>
    </subcellularLocation>
    <subcellularLocation>
        <location evidence="2">Cytoplasmic vesicle</location>
        <location evidence="2">COPII-coated vesicle membrane</location>
        <topology evidence="2">Peripheral membrane protein</topology>
        <orientation evidence="2">Cytoplasmic side</orientation>
    </subcellularLocation>
    <subcellularLocation>
        <location evidence="2">Endoplasmic reticulum membrane</location>
        <topology evidence="2">Peripheral membrane protein</topology>
    </subcellularLocation>
</comment>
<comment type="alternative products">
    <event type="alternative splicing"/>
    <isoform>
        <id>Q3TZ89-1</id>
        <name>1</name>
        <sequence type="displayed"/>
    </isoform>
    <isoform>
        <id>Q3TZ89-2</id>
        <name>2</name>
        <sequence type="described" ref="VSP_026764"/>
    </isoform>
</comment>
<comment type="PTM">
    <text evidence="2">Monoubiquitinated by the BCR(KLHL12) E3 ubiquitin ligase complex, leading to regulate the size of COPII coats.</text>
</comment>
<comment type="similarity">
    <text evidence="6">Belongs to the WD repeat SEC31 family.</text>
</comment>
<gene>
    <name type="primary">Sec31b</name>
    <name type="synonym">Gm341</name>
    <name type="synonym">Sec31l2</name>
</gene>
<proteinExistence type="evidence at protein level"/>
<reference key="1">
    <citation type="journal article" date="2005" name="Science">
        <title>The transcriptional landscape of the mammalian genome.</title>
        <authorList>
            <person name="Carninci P."/>
            <person name="Kasukawa T."/>
            <person name="Katayama S."/>
            <person name="Gough J."/>
            <person name="Frith M.C."/>
            <person name="Maeda N."/>
            <person name="Oyama R."/>
            <person name="Ravasi T."/>
            <person name="Lenhard B."/>
            <person name="Wells C."/>
            <person name="Kodzius R."/>
            <person name="Shimokawa K."/>
            <person name="Bajic V.B."/>
            <person name="Brenner S.E."/>
            <person name="Batalov S."/>
            <person name="Forrest A.R."/>
            <person name="Zavolan M."/>
            <person name="Davis M.J."/>
            <person name="Wilming L.G."/>
            <person name="Aidinis V."/>
            <person name="Allen J.E."/>
            <person name="Ambesi-Impiombato A."/>
            <person name="Apweiler R."/>
            <person name="Aturaliya R.N."/>
            <person name="Bailey T.L."/>
            <person name="Bansal M."/>
            <person name="Baxter L."/>
            <person name="Beisel K.W."/>
            <person name="Bersano T."/>
            <person name="Bono H."/>
            <person name="Chalk A.M."/>
            <person name="Chiu K.P."/>
            <person name="Choudhary V."/>
            <person name="Christoffels A."/>
            <person name="Clutterbuck D.R."/>
            <person name="Crowe M.L."/>
            <person name="Dalla E."/>
            <person name="Dalrymple B.P."/>
            <person name="de Bono B."/>
            <person name="Della Gatta G."/>
            <person name="di Bernardo D."/>
            <person name="Down T."/>
            <person name="Engstrom P."/>
            <person name="Fagiolini M."/>
            <person name="Faulkner G."/>
            <person name="Fletcher C.F."/>
            <person name="Fukushima T."/>
            <person name="Furuno M."/>
            <person name="Futaki S."/>
            <person name="Gariboldi M."/>
            <person name="Georgii-Hemming P."/>
            <person name="Gingeras T.R."/>
            <person name="Gojobori T."/>
            <person name="Green R.E."/>
            <person name="Gustincich S."/>
            <person name="Harbers M."/>
            <person name="Hayashi Y."/>
            <person name="Hensch T.K."/>
            <person name="Hirokawa N."/>
            <person name="Hill D."/>
            <person name="Huminiecki L."/>
            <person name="Iacono M."/>
            <person name="Ikeo K."/>
            <person name="Iwama A."/>
            <person name="Ishikawa T."/>
            <person name="Jakt M."/>
            <person name="Kanapin A."/>
            <person name="Katoh M."/>
            <person name="Kawasawa Y."/>
            <person name="Kelso J."/>
            <person name="Kitamura H."/>
            <person name="Kitano H."/>
            <person name="Kollias G."/>
            <person name="Krishnan S.P."/>
            <person name="Kruger A."/>
            <person name="Kummerfeld S.K."/>
            <person name="Kurochkin I.V."/>
            <person name="Lareau L.F."/>
            <person name="Lazarevic D."/>
            <person name="Lipovich L."/>
            <person name="Liu J."/>
            <person name="Liuni S."/>
            <person name="McWilliam S."/>
            <person name="Madan Babu M."/>
            <person name="Madera M."/>
            <person name="Marchionni L."/>
            <person name="Matsuda H."/>
            <person name="Matsuzawa S."/>
            <person name="Miki H."/>
            <person name="Mignone F."/>
            <person name="Miyake S."/>
            <person name="Morris K."/>
            <person name="Mottagui-Tabar S."/>
            <person name="Mulder N."/>
            <person name="Nakano N."/>
            <person name="Nakauchi H."/>
            <person name="Ng P."/>
            <person name="Nilsson R."/>
            <person name="Nishiguchi S."/>
            <person name="Nishikawa S."/>
            <person name="Nori F."/>
            <person name="Ohara O."/>
            <person name="Okazaki Y."/>
            <person name="Orlando V."/>
            <person name="Pang K.C."/>
            <person name="Pavan W.J."/>
            <person name="Pavesi G."/>
            <person name="Pesole G."/>
            <person name="Petrovsky N."/>
            <person name="Piazza S."/>
            <person name="Reed J."/>
            <person name="Reid J.F."/>
            <person name="Ring B.Z."/>
            <person name="Ringwald M."/>
            <person name="Rost B."/>
            <person name="Ruan Y."/>
            <person name="Salzberg S.L."/>
            <person name="Sandelin A."/>
            <person name="Schneider C."/>
            <person name="Schoenbach C."/>
            <person name="Sekiguchi K."/>
            <person name="Semple C.A."/>
            <person name="Seno S."/>
            <person name="Sessa L."/>
            <person name="Sheng Y."/>
            <person name="Shibata Y."/>
            <person name="Shimada H."/>
            <person name="Shimada K."/>
            <person name="Silva D."/>
            <person name="Sinclair B."/>
            <person name="Sperling S."/>
            <person name="Stupka E."/>
            <person name="Sugiura K."/>
            <person name="Sultana R."/>
            <person name="Takenaka Y."/>
            <person name="Taki K."/>
            <person name="Tammoja K."/>
            <person name="Tan S.L."/>
            <person name="Tang S."/>
            <person name="Taylor M.S."/>
            <person name="Tegner J."/>
            <person name="Teichmann S.A."/>
            <person name="Ueda H.R."/>
            <person name="van Nimwegen E."/>
            <person name="Verardo R."/>
            <person name="Wei C.L."/>
            <person name="Yagi K."/>
            <person name="Yamanishi H."/>
            <person name="Zabarovsky E."/>
            <person name="Zhu S."/>
            <person name="Zimmer A."/>
            <person name="Hide W."/>
            <person name="Bult C."/>
            <person name="Grimmond S.M."/>
            <person name="Teasdale R.D."/>
            <person name="Liu E.T."/>
            <person name="Brusic V."/>
            <person name="Quackenbush J."/>
            <person name="Wahlestedt C."/>
            <person name="Mattick J.S."/>
            <person name="Hume D.A."/>
            <person name="Kai C."/>
            <person name="Sasaki D."/>
            <person name="Tomaru Y."/>
            <person name="Fukuda S."/>
            <person name="Kanamori-Katayama M."/>
            <person name="Suzuki M."/>
            <person name="Aoki J."/>
            <person name="Arakawa T."/>
            <person name="Iida J."/>
            <person name="Imamura K."/>
            <person name="Itoh M."/>
            <person name="Kato T."/>
            <person name="Kawaji H."/>
            <person name="Kawagashira N."/>
            <person name="Kawashima T."/>
            <person name="Kojima M."/>
            <person name="Kondo S."/>
            <person name="Konno H."/>
            <person name="Nakano K."/>
            <person name="Ninomiya N."/>
            <person name="Nishio T."/>
            <person name="Okada M."/>
            <person name="Plessy C."/>
            <person name="Shibata K."/>
            <person name="Shiraki T."/>
            <person name="Suzuki S."/>
            <person name="Tagami M."/>
            <person name="Waki K."/>
            <person name="Watahiki A."/>
            <person name="Okamura-Oho Y."/>
            <person name="Suzuki H."/>
            <person name="Kawai J."/>
            <person name="Hayashizaki Y."/>
        </authorList>
    </citation>
    <scope>NUCLEOTIDE SEQUENCE [LARGE SCALE MRNA] (ISOFORM 2)</scope>
    <source>
        <strain>C57BL/6J</strain>
        <tissue>Inner ear</tissue>
    </source>
</reference>
<reference key="2">
    <citation type="journal article" date="2009" name="PLoS Biol.">
        <title>Lineage-specific biology revealed by a finished genome assembly of the mouse.</title>
        <authorList>
            <person name="Church D.M."/>
            <person name="Goodstadt L."/>
            <person name="Hillier L.W."/>
            <person name="Zody M.C."/>
            <person name="Goldstein S."/>
            <person name="She X."/>
            <person name="Bult C.J."/>
            <person name="Agarwala R."/>
            <person name="Cherry J.L."/>
            <person name="DiCuccio M."/>
            <person name="Hlavina W."/>
            <person name="Kapustin Y."/>
            <person name="Meric P."/>
            <person name="Maglott D."/>
            <person name="Birtle Z."/>
            <person name="Marques A.C."/>
            <person name="Graves T."/>
            <person name="Zhou S."/>
            <person name="Teague B."/>
            <person name="Potamousis K."/>
            <person name="Churas C."/>
            <person name="Place M."/>
            <person name="Herschleb J."/>
            <person name="Runnheim R."/>
            <person name="Forrest D."/>
            <person name="Amos-Landgraf J."/>
            <person name="Schwartz D.C."/>
            <person name="Cheng Z."/>
            <person name="Lindblad-Toh K."/>
            <person name="Eichler E.E."/>
            <person name="Ponting C.P."/>
        </authorList>
    </citation>
    <scope>NUCLEOTIDE SEQUENCE [LARGE SCALE GENOMIC DNA]</scope>
    <source>
        <strain>C57BL/6J</strain>
    </source>
</reference>
<reference key="3">
    <citation type="journal article" date="2004" name="Genome Res.">
        <title>The status, quality, and expansion of the NIH full-length cDNA project: the Mammalian Gene Collection (MGC).</title>
        <authorList>
            <consortium name="The MGC Project Team"/>
        </authorList>
    </citation>
    <scope>NUCLEOTIDE SEQUENCE [LARGE SCALE MRNA] OF 791-1158 (ISOFORMS 1/2)</scope>
    <source>
        <strain>FVB/N</strain>
        <tissue>Mammary tumor</tissue>
    </source>
</reference>
<reference key="4">
    <citation type="journal article" date="2010" name="Cell">
        <title>A tissue-specific atlas of mouse protein phosphorylation and expression.</title>
        <authorList>
            <person name="Huttlin E.L."/>
            <person name="Jedrychowski M.P."/>
            <person name="Elias J.E."/>
            <person name="Goswami T."/>
            <person name="Rad R."/>
            <person name="Beausoleil S.A."/>
            <person name="Villen J."/>
            <person name="Haas W."/>
            <person name="Sowa M.E."/>
            <person name="Gygi S.P."/>
        </authorList>
    </citation>
    <scope>IDENTIFICATION BY MASS SPECTROMETRY [LARGE SCALE ANALYSIS]</scope>
    <source>
        <tissue>Heart</tissue>
    </source>
</reference>
<keyword id="KW-0025">Alternative splicing</keyword>
<keyword id="KW-0963">Cytoplasm</keyword>
<keyword id="KW-0968">Cytoplasmic vesicle</keyword>
<keyword id="KW-0256">Endoplasmic reticulum</keyword>
<keyword id="KW-0931">ER-Golgi transport</keyword>
<keyword id="KW-0472">Membrane</keyword>
<keyword id="KW-0653">Protein transport</keyword>
<keyword id="KW-1185">Reference proteome</keyword>
<keyword id="KW-0677">Repeat</keyword>
<keyword id="KW-0813">Transport</keyword>
<keyword id="KW-0832">Ubl conjugation</keyword>
<keyword id="KW-0853">WD repeat</keyword>
<protein>
    <recommendedName>
        <fullName>Protein transport protein Sec31B</fullName>
    </recommendedName>
    <alternativeName>
        <fullName>SEC31-like protein 2</fullName>
    </alternativeName>
    <alternativeName>
        <fullName>SEC31-related protein B</fullName>
    </alternativeName>
</protein>
<name>SC31B_MOUSE</name>
<accession>Q3TZ89</accession>
<accession>Q811L4</accession>
<evidence type="ECO:0000250" key="1"/>
<evidence type="ECO:0000250" key="2">
    <source>
        <dbReference type="UniProtKB" id="Q9NQW1"/>
    </source>
</evidence>
<evidence type="ECO:0000255" key="3">
    <source>
        <dbReference type="PROSITE-ProRule" id="PRU00221"/>
    </source>
</evidence>
<evidence type="ECO:0000256" key="4">
    <source>
        <dbReference type="SAM" id="MobiDB-lite"/>
    </source>
</evidence>
<evidence type="ECO:0000303" key="5">
    <source>
    </source>
</evidence>
<evidence type="ECO:0000305" key="6"/>
<organism>
    <name type="scientific">Mus musculus</name>
    <name type="common">Mouse</name>
    <dbReference type="NCBI Taxonomy" id="10090"/>
    <lineage>
        <taxon>Eukaryota</taxon>
        <taxon>Metazoa</taxon>
        <taxon>Chordata</taxon>
        <taxon>Craniata</taxon>
        <taxon>Vertebrata</taxon>
        <taxon>Euteleostomi</taxon>
        <taxon>Mammalia</taxon>
        <taxon>Eutheria</taxon>
        <taxon>Euarchontoglires</taxon>
        <taxon>Glires</taxon>
        <taxon>Rodentia</taxon>
        <taxon>Myomorpha</taxon>
        <taxon>Muroidea</taxon>
        <taxon>Muridae</taxon>
        <taxon>Murinae</taxon>
        <taxon>Mus</taxon>
        <taxon>Mus</taxon>
    </lineage>
</organism>
<dbReference type="EMBL" id="AK158017">
    <property type="protein sequence ID" value="BAE34320.1"/>
    <property type="molecule type" value="mRNA"/>
</dbReference>
<dbReference type="EMBL" id="AC151478">
    <property type="status" value="NOT_ANNOTATED_CDS"/>
    <property type="molecule type" value="Genomic_DNA"/>
</dbReference>
<dbReference type="EMBL" id="BC042701">
    <property type="protein sequence ID" value="AAH42701.1"/>
    <property type="molecule type" value="mRNA"/>
</dbReference>
<dbReference type="CCDS" id="CCDS37997.1">
    <molecule id="Q3TZ89-1"/>
</dbReference>
<dbReference type="RefSeq" id="NP_001028515.1">
    <molecule id="Q3TZ89-1"/>
    <property type="nucleotide sequence ID" value="NM_001033343.1"/>
</dbReference>
<dbReference type="SMR" id="Q3TZ89"/>
<dbReference type="BioGRID" id="232221">
    <property type="interactions" value="1"/>
</dbReference>
<dbReference type="FunCoup" id="Q3TZ89">
    <property type="interactions" value="630"/>
</dbReference>
<dbReference type="IntAct" id="Q3TZ89">
    <property type="interactions" value="1"/>
</dbReference>
<dbReference type="MINT" id="Q3TZ89"/>
<dbReference type="STRING" id="10090.ENSMUSP00000064900"/>
<dbReference type="GlyGen" id="Q3TZ89">
    <property type="glycosylation" value="2 sites, 1 O-linked glycan (1 site)"/>
</dbReference>
<dbReference type="iPTMnet" id="Q3TZ89"/>
<dbReference type="PhosphoSitePlus" id="Q3TZ89"/>
<dbReference type="SwissPalm" id="Q3TZ89"/>
<dbReference type="jPOST" id="Q3TZ89"/>
<dbReference type="PaxDb" id="10090-ENSMUSP00000064900"/>
<dbReference type="PeptideAtlas" id="Q3TZ89"/>
<dbReference type="ProteomicsDB" id="255466">
    <molecule id="Q3TZ89-1"/>
</dbReference>
<dbReference type="ProteomicsDB" id="255467">
    <molecule id="Q3TZ89-2"/>
</dbReference>
<dbReference type="Antibodypedia" id="49267">
    <property type="antibodies" value="81 antibodies from 18 providers"/>
</dbReference>
<dbReference type="Ensembl" id="ENSMUST00000063632.14">
    <molecule id="Q3TZ89-1"/>
    <property type="protein sequence ID" value="ENSMUSP00000064900.8"/>
    <property type="gene ID" value="ENSMUSG00000051984.14"/>
</dbReference>
<dbReference type="Ensembl" id="ENSMUST00000111985.2">
    <molecule id="Q3TZ89-2"/>
    <property type="protein sequence ID" value="ENSMUSP00000107616.2"/>
    <property type="gene ID" value="ENSMUSG00000051984.14"/>
</dbReference>
<dbReference type="GeneID" id="240667"/>
<dbReference type="KEGG" id="mmu:240667"/>
<dbReference type="UCSC" id="uc008hpu.1">
    <molecule id="Q3TZ89-1"/>
    <property type="organism name" value="mouse"/>
</dbReference>
<dbReference type="AGR" id="MGI:2685187"/>
<dbReference type="CTD" id="25956"/>
<dbReference type="MGI" id="MGI:2685187">
    <property type="gene designation" value="Sec31b"/>
</dbReference>
<dbReference type="VEuPathDB" id="HostDB:ENSMUSG00000051984"/>
<dbReference type="eggNOG" id="KOG0307">
    <property type="taxonomic scope" value="Eukaryota"/>
</dbReference>
<dbReference type="GeneTree" id="ENSGT00390000003175"/>
<dbReference type="HOGENOM" id="CLU_003033_1_0_1"/>
<dbReference type="InParanoid" id="Q3TZ89"/>
<dbReference type="OMA" id="AQWAFGG"/>
<dbReference type="OrthoDB" id="542917at2759"/>
<dbReference type="PhylomeDB" id="Q3TZ89"/>
<dbReference type="TreeFam" id="TF313842"/>
<dbReference type="Reactome" id="R-MMU-204005">
    <property type="pathway name" value="COPII-mediated vesicle transport"/>
</dbReference>
<dbReference type="BioGRID-ORCS" id="240667">
    <property type="hits" value="1 hit in 77 CRISPR screens"/>
</dbReference>
<dbReference type="PRO" id="PR:Q3TZ89"/>
<dbReference type="Proteomes" id="UP000000589">
    <property type="component" value="Chromosome 19"/>
</dbReference>
<dbReference type="RNAct" id="Q3TZ89">
    <property type="molecule type" value="protein"/>
</dbReference>
<dbReference type="Bgee" id="ENSMUSG00000051984">
    <property type="expression patterns" value="Expressed in hindlimb stylopod muscle and 50 other cell types or tissues"/>
</dbReference>
<dbReference type="ExpressionAtlas" id="Q3TZ89">
    <property type="expression patterns" value="baseline and differential"/>
</dbReference>
<dbReference type="GO" id="GO:0005789">
    <property type="term" value="C:endoplasmic reticulum membrane"/>
    <property type="evidence" value="ECO:0007669"/>
    <property type="project" value="UniProtKB-SubCell"/>
</dbReference>
<dbReference type="GO" id="GO:0012507">
    <property type="term" value="C:ER to Golgi transport vesicle membrane"/>
    <property type="evidence" value="ECO:0007669"/>
    <property type="project" value="UniProtKB-SubCell"/>
</dbReference>
<dbReference type="GO" id="GO:0030120">
    <property type="term" value="C:vesicle coat"/>
    <property type="evidence" value="ECO:0000266"/>
    <property type="project" value="MGI"/>
</dbReference>
<dbReference type="GO" id="GO:0006888">
    <property type="term" value="P:endoplasmic reticulum to Golgi vesicle-mediated transport"/>
    <property type="evidence" value="ECO:0007669"/>
    <property type="project" value="InterPro"/>
</dbReference>
<dbReference type="GO" id="GO:0015031">
    <property type="term" value="P:protein transport"/>
    <property type="evidence" value="ECO:0007669"/>
    <property type="project" value="UniProtKB-KW"/>
</dbReference>
<dbReference type="FunFam" id="2.130.10.10:FF:000009">
    <property type="entry name" value="Protein transport protein Sec31A isoform A"/>
    <property type="match status" value="1"/>
</dbReference>
<dbReference type="FunFam" id="1.20.940.10:FF:000005">
    <property type="entry name" value="protein transport protein Sec31B isoform X1"/>
    <property type="match status" value="1"/>
</dbReference>
<dbReference type="FunFam" id="1.25.40.1030:FF:000006">
    <property type="entry name" value="SEC31 homolog B, COPII coat complex component"/>
    <property type="match status" value="1"/>
</dbReference>
<dbReference type="Gene3D" id="1.25.40.1030">
    <property type="match status" value="1"/>
</dbReference>
<dbReference type="Gene3D" id="1.20.940.10">
    <property type="entry name" value="Functional domain of the splicing factor Prp18"/>
    <property type="match status" value="1"/>
</dbReference>
<dbReference type="Gene3D" id="2.130.10.10">
    <property type="entry name" value="YVTN repeat-like/Quinoprotein amine dehydrogenase"/>
    <property type="match status" value="1"/>
</dbReference>
<dbReference type="InterPro" id="IPR040251">
    <property type="entry name" value="SEC31-like"/>
</dbReference>
<dbReference type="InterPro" id="IPR015943">
    <property type="entry name" value="WD40/YVTN_repeat-like_dom_sf"/>
</dbReference>
<dbReference type="InterPro" id="IPR019775">
    <property type="entry name" value="WD40_repeat_CS"/>
</dbReference>
<dbReference type="InterPro" id="IPR036322">
    <property type="entry name" value="WD40_repeat_dom_sf"/>
</dbReference>
<dbReference type="InterPro" id="IPR001680">
    <property type="entry name" value="WD40_rpt"/>
</dbReference>
<dbReference type="PANTHER" id="PTHR13923:SF22">
    <property type="entry name" value="PROTEIN TRANSPORT PROTEIN SEC31B"/>
    <property type="match status" value="1"/>
</dbReference>
<dbReference type="PANTHER" id="PTHR13923">
    <property type="entry name" value="SEC31-RELATED PROTEIN"/>
    <property type="match status" value="1"/>
</dbReference>
<dbReference type="Pfam" id="PF00400">
    <property type="entry name" value="WD40"/>
    <property type="match status" value="2"/>
</dbReference>
<dbReference type="SMART" id="SM00320">
    <property type="entry name" value="WD40"/>
    <property type="match status" value="5"/>
</dbReference>
<dbReference type="SUPFAM" id="SSF50978">
    <property type="entry name" value="WD40 repeat-like"/>
    <property type="match status" value="1"/>
</dbReference>
<dbReference type="PROSITE" id="PS00678">
    <property type="entry name" value="WD_REPEATS_1"/>
    <property type="match status" value="1"/>
</dbReference>
<dbReference type="PROSITE" id="PS50082">
    <property type="entry name" value="WD_REPEATS_2"/>
    <property type="match status" value="2"/>
</dbReference>
<dbReference type="PROSITE" id="PS50294">
    <property type="entry name" value="WD_REPEATS_REGION"/>
    <property type="match status" value="1"/>
</dbReference>